<evidence type="ECO:0000255" key="1">
    <source>
        <dbReference type="HAMAP-Rule" id="MF_00739"/>
    </source>
</evidence>
<evidence type="ECO:0000305" key="2"/>
<dbReference type="EC" id="3.5.1.5" evidence="1"/>
<dbReference type="EMBL" id="AF085732">
    <property type="protein sequence ID" value="AAD28140.1"/>
    <property type="molecule type" value="Genomic_DNA"/>
</dbReference>
<dbReference type="EMBL" id="CP000942">
    <property type="protein sequence ID" value="ACA32740.1"/>
    <property type="molecule type" value="Genomic_DNA"/>
</dbReference>
<dbReference type="RefSeq" id="WP_010891770.1">
    <property type="nucleotide sequence ID" value="NC_010503.1"/>
</dbReference>
<dbReference type="SMR" id="B1AJ75"/>
<dbReference type="GeneID" id="29672370"/>
<dbReference type="KEGG" id="upa:UPA3_0453"/>
<dbReference type="HOGENOM" id="CLU_145825_1_0_14"/>
<dbReference type="UniPathway" id="UPA00258">
    <property type="reaction ID" value="UER00370"/>
</dbReference>
<dbReference type="Proteomes" id="UP000002162">
    <property type="component" value="Chromosome"/>
</dbReference>
<dbReference type="GO" id="GO:0005737">
    <property type="term" value="C:cytoplasm"/>
    <property type="evidence" value="ECO:0007669"/>
    <property type="project" value="UniProtKB-SubCell"/>
</dbReference>
<dbReference type="GO" id="GO:0016151">
    <property type="term" value="F:nickel cation binding"/>
    <property type="evidence" value="ECO:0007669"/>
    <property type="project" value="InterPro"/>
</dbReference>
<dbReference type="GO" id="GO:0009039">
    <property type="term" value="F:urease activity"/>
    <property type="evidence" value="ECO:0007669"/>
    <property type="project" value="UniProtKB-UniRule"/>
</dbReference>
<dbReference type="GO" id="GO:0043419">
    <property type="term" value="P:urea catabolic process"/>
    <property type="evidence" value="ECO:0007669"/>
    <property type="project" value="UniProtKB-UniRule"/>
</dbReference>
<dbReference type="CDD" id="cd00390">
    <property type="entry name" value="Urease_gamma"/>
    <property type="match status" value="1"/>
</dbReference>
<dbReference type="Gene3D" id="3.30.280.10">
    <property type="entry name" value="Urease, gamma-like subunit"/>
    <property type="match status" value="1"/>
</dbReference>
<dbReference type="HAMAP" id="MF_00739">
    <property type="entry name" value="Urease_gamma"/>
    <property type="match status" value="1"/>
</dbReference>
<dbReference type="InterPro" id="IPR012010">
    <property type="entry name" value="Urease_gamma"/>
</dbReference>
<dbReference type="InterPro" id="IPR002026">
    <property type="entry name" value="Urease_gamma/gamma-beta_su"/>
</dbReference>
<dbReference type="InterPro" id="IPR036463">
    <property type="entry name" value="Urease_gamma_sf"/>
</dbReference>
<dbReference type="InterPro" id="IPR050069">
    <property type="entry name" value="Urease_subunit"/>
</dbReference>
<dbReference type="NCBIfam" id="NF009712">
    <property type="entry name" value="PRK13241.1"/>
    <property type="match status" value="1"/>
</dbReference>
<dbReference type="NCBIfam" id="TIGR00193">
    <property type="entry name" value="urease_gam"/>
    <property type="match status" value="1"/>
</dbReference>
<dbReference type="PANTHER" id="PTHR33569">
    <property type="entry name" value="UREASE"/>
    <property type="match status" value="1"/>
</dbReference>
<dbReference type="PANTHER" id="PTHR33569:SF1">
    <property type="entry name" value="UREASE"/>
    <property type="match status" value="1"/>
</dbReference>
<dbReference type="Pfam" id="PF00547">
    <property type="entry name" value="Urease_gamma"/>
    <property type="match status" value="1"/>
</dbReference>
<dbReference type="PIRSF" id="PIRSF001223">
    <property type="entry name" value="Urease_gamma"/>
    <property type="match status" value="1"/>
</dbReference>
<dbReference type="SUPFAM" id="SSF54111">
    <property type="entry name" value="Urease, gamma-subunit"/>
    <property type="match status" value="1"/>
</dbReference>
<accession>B1AJ75</accession>
<accession>Q56557</accession>
<accession>Q9R2X4</accession>
<sequence>MNLSLREVQKLLITVAADVARRRLARGLKLNYSEAVALITDHVMEGARDGKLVADLMQSAREVLRVDQVMEGVDTMVSIIQVEVTFPDGTKLVSVHDPIYK</sequence>
<gene>
    <name evidence="1" type="primary">ureA</name>
    <name type="ordered locus">UPA3_0453</name>
</gene>
<proteinExistence type="inferred from homology"/>
<reference key="1">
    <citation type="journal article" date="1999" name="Int. J. Syst. Bacteriol.">
        <title>Phylogenetic analysis of Ureaplasma urealyticum -- support for the establishment of a new species, Ureaplasma parvum.</title>
        <authorList>
            <person name="Kong F."/>
            <person name="James G."/>
            <person name="Ma Z."/>
            <person name="Gordon S."/>
            <person name="Wang B."/>
            <person name="Gilbert G.L."/>
        </authorList>
    </citation>
    <scope>NUCLEOTIDE SEQUENCE [GENOMIC DNA]</scope>
</reference>
<reference key="2">
    <citation type="submission" date="2008-02" db="EMBL/GenBank/DDBJ databases">
        <title>Genome sequence of Ureaplasma parvum serovar 3.</title>
        <authorList>
            <person name="Methe B.A."/>
            <person name="Glass J."/>
            <person name="Waites K."/>
            <person name="Shrivastava S."/>
        </authorList>
    </citation>
    <scope>NUCLEOTIDE SEQUENCE [LARGE SCALE GENOMIC DNA]</scope>
    <source>
        <strain>ATCC 27815 / 27 / NCTC 11736</strain>
    </source>
</reference>
<comment type="catalytic activity">
    <reaction evidence="1">
        <text>urea + 2 H2O + H(+) = hydrogencarbonate + 2 NH4(+)</text>
        <dbReference type="Rhea" id="RHEA:20557"/>
        <dbReference type="ChEBI" id="CHEBI:15377"/>
        <dbReference type="ChEBI" id="CHEBI:15378"/>
        <dbReference type="ChEBI" id="CHEBI:16199"/>
        <dbReference type="ChEBI" id="CHEBI:17544"/>
        <dbReference type="ChEBI" id="CHEBI:28938"/>
        <dbReference type="EC" id="3.5.1.5"/>
    </reaction>
</comment>
<comment type="pathway">
    <text evidence="1">Nitrogen metabolism; urea degradation; CO(2) and NH(3) from urea (urease route): step 1/1.</text>
</comment>
<comment type="subunit">
    <text evidence="1">Heterotrimer of UreA (gamma), UreB (beta) and UreC (alpha) subunits. Three heterotrimers associate to form the active enzyme.</text>
</comment>
<comment type="subcellular location">
    <subcellularLocation>
        <location evidence="1">Cytoplasm</location>
    </subcellularLocation>
</comment>
<comment type="similarity">
    <text evidence="1">Belongs to the urease gamma subunit family.</text>
</comment>
<keyword id="KW-0963">Cytoplasm</keyword>
<keyword id="KW-0378">Hydrolase</keyword>
<protein>
    <recommendedName>
        <fullName evidence="1">Urease subunit gamma</fullName>
        <ecNumber evidence="1">3.5.1.5</ecNumber>
    </recommendedName>
    <alternativeName>
        <fullName evidence="1">Urea amidohydrolase subunit gamma</fullName>
    </alternativeName>
</protein>
<feature type="chain" id="PRO_1000083432" description="Urease subunit gamma">
    <location>
        <begin position="1"/>
        <end position="101"/>
    </location>
</feature>
<feature type="sequence conflict" description="In Ref. 1; AAD28140." evidence="2" ref="1">
    <original>Y</original>
    <variation>H</variation>
    <location>
        <position position="100"/>
    </location>
</feature>
<name>URE3_UREP2</name>
<organism>
    <name type="scientific">Ureaplasma parvum serovar 3 (strain ATCC 27815 / 27 / NCTC 11736)</name>
    <dbReference type="NCBI Taxonomy" id="505682"/>
    <lineage>
        <taxon>Bacteria</taxon>
        <taxon>Bacillati</taxon>
        <taxon>Mycoplasmatota</taxon>
        <taxon>Mycoplasmoidales</taxon>
        <taxon>Mycoplasmoidaceae</taxon>
        <taxon>Ureaplasma</taxon>
    </lineage>
</organism>